<accession>B8N316</accession>
<sequence>MVLLHPLLTAAALLGASARAQSVVGTPFGFASGTTGGGNAAPAAPKDTNELKEWLADPNPRVIVIDKEFNFIGTEDTCTDCECCIPDSNTCGDAGQNAIKTEGSDWCGSYPATTCTYDNAGLEGMEVASDKTIIGVGDAGVIRGKGLRLVNGVSNIIIQNVHITELNPQYIWGGDAISLDGTDKIWVDHVKVSLVGRQMFVTGYESSGGVTVSNSEFDGQTKWSASCDGHHYWSVLGYGKGDQITFANNYIHHTSGRSPKIEFDSHWHAYNNFWENNSGHAFDVGEGANVLIEGNVFSNVKTPMNPEDTPGSTFAVNAQDASSCTSALGRPCIANELTSSGELSGNDEAVLSGWPKGEGDTKAMTTDKVPSYVKANAGVGKLGSGGSGAASSSASITPSPTSSAIPSSSATPSSSAYARRHYARHHHY</sequence>
<comment type="function">
    <text evidence="1">Pectinolytic enzymes consist of four classes of enzymes: pectin lyase, polygalacturonase, pectin methylesterase and rhamnogalacturonase. Among pectinolytic enzymes, pectin lyase is the most important in depolymerization of pectin, since it cleaves internal glycosidic bonds of highly methylated pectins (By similarity).</text>
</comment>
<comment type="catalytic activity">
    <reaction>
        <text>Eliminative cleavage of (1-&gt;4)-alpha-D-galacturonan methyl ester to give oligosaccharides with 4-deoxy-6-O-methyl-alpha-D-galact-4-enuronosyl groups at their non-reducing ends.</text>
        <dbReference type="EC" id="4.2.2.10"/>
    </reaction>
</comment>
<comment type="subcellular location">
    <subcellularLocation>
        <location evidence="1">Secreted</location>
    </subcellularLocation>
</comment>
<comment type="similarity">
    <text evidence="4">Belongs to the polysaccharide lyase 1 family.</text>
</comment>
<protein>
    <recommendedName>
        <fullName>Probable pectin lyase F</fullName>
        <shortName>PLF</shortName>
        <ecNumber>4.2.2.10</ecNumber>
    </recommendedName>
</protein>
<name>PELF_ASPFN</name>
<proteinExistence type="inferred from homology"/>
<gene>
    <name type="primary">pelF</name>
    <name type="ORF">AFLA_025400</name>
</gene>
<feature type="signal peptide" evidence="2">
    <location>
        <begin position="1"/>
        <end position="20"/>
    </location>
</feature>
<feature type="chain" id="PRO_0000394357" description="Probable pectin lyase F">
    <location>
        <begin position="21"/>
        <end position="428"/>
    </location>
</feature>
<feature type="region of interest" description="Disordered" evidence="3">
    <location>
        <begin position="337"/>
        <end position="367"/>
    </location>
</feature>
<feature type="region of interest" description="Disordered" evidence="3">
    <location>
        <begin position="383"/>
        <end position="428"/>
    </location>
</feature>
<feature type="compositionally biased region" description="Low complexity" evidence="3">
    <location>
        <begin position="389"/>
        <end position="417"/>
    </location>
</feature>
<feature type="compositionally biased region" description="Basic residues" evidence="3">
    <location>
        <begin position="418"/>
        <end position="428"/>
    </location>
</feature>
<feature type="active site" evidence="2">
    <location>
        <position position="257"/>
    </location>
</feature>
<feature type="glycosylation site" description="N-linked (GlcNAc...) asparagine" evidence="2">
    <location>
        <position position="276"/>
    </location>
</feature>
<feature type="disulfide bond" evidence="1">
    <location>
        <begin position="83"/>
        <end position="107"/>
    </location>
</feature>
<feature type="disulfide bond" evidence="1">
    <location>
        <begin position="324"/>
        <end position="332"/>
    </location>
</feature>
<keyword id="KW-0119">Carbohydrate metabolism</keyword>
<keyword id="KW-0961">Cell wall biogenesis/degradation</keyword>
<keyword id="KW-1015">Disulfide bond</keyword>
<keyword id="KW-0325">Glycoprotein</keyword>
<keyword id="KW-0456">Lyase</keyword>
<keyword id="KW-0624">Polysaccharide degradation</keyword>
<keyword id="KW-0964">Secreted</keyword>
<keyword id="KW-0732">Signal</keyword>
<dbReference type="EC" id="4.2.2.10"/>
<dbReference type="EMBL" id="EQ963473">
    <property type="protein sequence ID" value="EED55269.1"/>
    <property type="molecule type" value="Genomic_DNA"/>
</dbReference>
<dbReference type="RefSeq" id="XP_002374051.1">
    <property type="nucleotide sequence ID" value="XM_002374010.1"/>
</dbReference>
<dbReference type="SMR" id="B8N316"/>
<dbReference type="STRING" id="332952.B8N316"/>
<dbReference type="GlyCosmos" id="B8N316">
    <property type="glycosylation" value="1 site, No reported glycans"/>
</dbReference>
<dbReference type="EnsemblFungi" id="EED55269">
    <property type="protein sequence ID" value="EED55269"/>
    <property type="gene ID" value="AFLA_025400"/>
</dbReference>
<dbReference type="VEuPathDB" id="FungiDB:AFLA_000385"/>
<dbReference type="eggNOG" id="ENOG502QXM6">
    <property type="taxonomic scope" value="Eukaryota"/>
</dbReference>
<dbReference type="HOGENOM" id="CLU_021980_0_1_1"/>
<dbReference type="OMA" id="DWCGSYP"/>
<dbReference type="GO" id="GO:0005576">
    <property type="term" value="C:extracellular region"/>
    <property type="evidence" value="ECO:0007669"/>
    <property type="project" value="UniProtKB-SubCell"/>
</dbReference>
<dbReference type="GO" id="GO:0030570">
    <property type="term" value="F:pectate lyase activity"/>
    <property type="evidence" value="ECO:0007669"/>
    <property type="project" value="InterPro"/>
</dbReference>
<dbReference type="GO" id="GO:0047490">
    <property type="term" value="F:pectin lyase activity"/>
    <property type="evidence" value="ECO:0000250"/>
    <property type="project" value="UniProtKB"/>
</dbReference>
<dbReference type="GO" id="GO:0071555">
    <property type="term" value="P:cell wall organization"/>
    <property type="evidence" value="ECO:0007669"/>
    <property type="project" value="UniProtKB-KW"/>
</dbReference>
<dbReference type="GO" id="GO:0045490">
    <property type="term" value="P:pectin catabolic process"/>
    <property type="evidence" value="ECO:0000250"/>
    <property type="project" value="UniProtKB"/>
</dbReference>
<dbReference type="FunFam" id="2.160.20.10:FF:000003">
    <property type="entry name" value="Pectin lyase F"/>
    <property type="match status" value="1"/>
</dbReference>
<dbReference type="Gene3D" id="2.160.20.10">
    <property type="entry name" value="Single-stranded right-handed beta-helix, Pectin lyase-like"/>
    <property type="match status" value="1"/>
</dbReference>
<dbReference type="InterPro" id="IPR002022">
    <property type="entry name" value="Pec_lyase"/>
</dbReference>
<dbReference type="InterPro" id="IPR012334">
    <property type="entry name" value="Pectin_lyas_fold"/>
</dbReference>
<dbReference type="InterPro" id="IPR011050">
    <property type="entry name" value="Pectin_lyase_fold/virulence"/>
</dbReference>
<dbReference type="InterPro" id="IPR045032">
    <property type="entry name" value="PEL"/>
</dbReference>
<dbReference type="PANTHER" id="PTHR31683">
    <property type="entry name" value="PECTATE LYASE 18-RELATED"/>
    <property type="match status" value="1"/>
</dbReference>
<dbReference type="PANTHER" id="PTHR31683:SF67">
    <property type="entry name" value="PECTIN LYASE F-RELATED"/>
    <property type="match status" value="1"/>
</dbReference>
<dbReference type="Pfam" id="PF00544">
    <property type="entry name" value="Pectate_lyase_4"/>
    <property type="match status" value="1"/>
</dbReference>
<dbReference type="SMART" id="SM00656">
    <property type="entry name" value="Amb_all"/>
    <property type="match status" value="1"/>
</dbReference>
<dbReference type="SUPFAM" id="SSF51126">
    <property type="entry name" value="Pectin lyase-like"/>
    <property type="match status" value="1"/>
</dbReference>
<reference key="1">
    <citation type="journal article" date="2015" name="Genome Announc.">
        <title>Genome sequence of Aspergillus flavus NRRL 3357, a strain that causes aflatoxin contamination of food and feed.</title>
        <authorList>
            <person name="Nierman W.C."/>
            <person name="Yu J."/>
            <person name="Fedorova-Abrams N.D."/>
            <person name="Losada L."/>
            <person name="Cleveland T.E."/>
            <person name="Bhatnagar D."/>
            <person name="Bennett J.W."/>
            <person name="Dean R."/>
            <person name="Payne G.A."/>
        </authorList>
    </citation>
    <scope>NUCLEOTIDE SEQUENCE [LARGE SCALE GENOMIC DNA]</scope>
    <source>
        <strain>ATCC 200026 / FGSC A1120 / IAM 13836 / NRRL 3357 / JCM 12722 / SRRC 167</strain>
    </source>
</reference>
<organism>
    <name type="scientific">Aspergillus flavus (strain ATCC 200026 / FGSC A1120 / IAM 13836 / NRRL 3357 / JCM 12722 / SRRC 167)</name>
    <dbReference type="NCBI Taxonomy" id="332952"/>
    <lineage>
        <taxon>Eukaryota</taxon>
        <taxon>Fungi</taxon>
        <taxon>Dikarya</taxon>
        <taxon>Ascomycota</taxon>
        <taxon>Pezizomycotina</taxon>
        <taxon>Eurotiomycetes</taxon>
        <taxon>Eurotiomycetidae</taxon>
        <taxon>Eurotiales</taxon>
        <taxon>Aspergillaceae</taxon>
        <taxon>Aspergillus</taxon>
        <taxon>Aspergillus subgen. Circumdati</taxon>
    </lineage>
</organism>
<evidence type="ECO:0000250" key="1"/>
<evidence type="ECO:0000255" key="2"/>
<evidence type="ECO:0000256" key="3">
    <source>
        <dbReference type="SAM" id="MobiDB-lite"/>
    </source>
</evidence>
<evidence type="ECO:0000305" key="4"/>